<dbReference type="EC" id="3.4.-.-"/>
<dbReference type="EMBL" id="M14031">
    <property type="protein sequence ID" value="AAA23529.1"/>
    <property type="molecule type" value="Genomic_DNA"/>
</dbReference>
<dbReference type="EMBL" id="U00096">
    <property type="protein sequence ID" value="AAC74778.1"/>
    <property type="molecule type" value="Genomic_DNA"/>
</dbReference>
<dbReference type="EMBL" id="AP009048">
    <property type="protein sequence ID" value="BAA15476.1"/>
    <property type="molecule type" value="Genomic_DNA"/>
</dbReference>
<dbReference type="PIR" id="D64929">
    <property type="entry name" value="D64929"/>
</dbReference>
<dbReference type="RefSeq" id="NP_416223.1">
    <property type="nucleotide sequence ID" value="NC_000913.3"/>
</dbReference>
<dbReference type="RefSeq" id="WP_001209795.1">
    <property type="nucleotide sequence ID" value="NZ_STEB01000009.1"/>
</dbReference>
<dbReference type="SMR" id="P23898"/>
<dbReference type="BioGRID" id="4260300">
    <property type="interactions" value="304"/>
</dbReference>
<dbReference type="FunCoup" id="P23898">
    <property type="interactions" value="70"/>
</dbReference>
<dbReference type="IntAct" id="P23898">
    <property type="interactions" value="1"/>
</dbReference>
<dbReference type="STRING" id="511145.b1708"/>
<dbReference type="MEROPS" id="C40.A01"/>
<dbReference type="PaxDb" id="511145-b1708"/>
<dbReference type="EnsemblBacteria" id="AAC74778">
    <property type="protein sequence ID" value="AAC74778"/>
    <property type="gene ID" value="b1708"/>
</dbReference>
<dbReference type="GeneID" id="946220"/>
<dbReference type="KEGG" id="ecj:JW1698"/>
<dbReference type="KEGG" id="eco:b1708"/>
<dbReference type="KEGG" id="ecoc:C3026_09780"/>
<dbReference type="PATRIC" id="fig|1411691.4.peg.549"/>
<dbReference type="EchoBASE" id="EB1123"/>
<dbReference type="eggNOG" id="COG0791">
    <property type="taxonomic scope" value="Bacteria"/>
</dbReference>
<dbReference type="HOGENOM" id="CLU_016043_9_3_6"/>
<dbReference type="InParanoid" id="P23898"/>
<dbReference type="OMA" id="WKRAYWQ"/>
<dbReference type="OrthoDB" id="9807055at2"/>
<dbReference type="PhylomeDB" id="P23898"/>
<dbReference type="BioCyc" id="EcoCyc:EG11133-MONOMER"/>
<dbReference type="PRO" id="PR:P23898"/>
<dbReference type="Proteomes" id="UP000000625">
    <property type="component" value="Chromosome"/>
</dbReference>
<dbReference type="GO" id="GO:0005886">
    <property type="term" value="C:plasma membrane"/>
    <property type="evidence" value="ECO:0007669"/>
    <property type="project" value="UniProtKB-SubCell"/>
</dbReference>
<dbReference type="GO" id="GO:0008234">
    <property type="term" value="F:cysteine-type peptidase activity"/>
    <property type="evidence" value="ECO:0007669"/>
    <property type="project" value="UniProtKB-KW"/>
</dbReference>
<dbReference type="GO" id="GO:0004175">
    <property type="term" value="F:endopeptidase activity"/>
    <property type="evidence" value="ECO:0000318"/>
    <property type="project" value="GO_Central"/>
</dbReference>
<dbReference type="GO" id="GO:0009254">
    <property type="term" value="P:peptidoglycan turnover"/>
    <property type="evidence" value="ECO:0000318"/>
    <property type="project" value="GO_Central"/>
</dbReference>
<dbReference type="GO" id="GO:0006508">
    <property type="term" value="P:proteolysis"/>
    <property type="evidence" value="ECO:0007669"/>
    <property type="project" value="UniProtKB-KW"/>
</dbReference>
<dbReference type="Gene3D" id="3.90.1720.10">
    <property type="entry name" value="endopeptidase domain like (from Nostoc punctiforme)"/>
    <property type="match status" value="1"/>
</dbReference>
<dbReference type="InterPro" id="IPR052062">
    <property type="entry name" value="Murein_DD/LD_carboxypeptidase"/>
</dbReference>
<dbReference type="InterPro" id="IPR000064">
    <property type="entry name" value="NLP_P60_dom"/>
</dbReference>
<dbReference type="InterPro" id="IPR038765">
    <property type="entry name" value="Papain-like_cys_pep_sf"/>
</dbReference>
<dbReference type="PANTHER" id="PTHR47360:SF1">
    <property type="entry name" value="ENDOPEPTIDASE NLPC-RELATED"/>
    <property type="match status" value="1"/>
</dbReference>
<dbReference type="PANTHER" id="PTHR47360">
    <property type="entry name" value="MUREIN DD-ENDOPEPTIDASE MEPS/MUREIN LD-CARBOXYPEPTIDASE"/>
    <property type="match status" value="1"/>
</dbReference>
<dbReference type="Pfam" id="PF00877">
    <property type="entry name" value="NLPC_P60"/>
    <property type="match status" value="1"/>
</dbReference>
<dbReference type="SUPFAM" id="SSF54001">
    <property type="entry name" value="Cysteine proteinases"/>
    <property type="match status" value="1"/>
</dbReference>
<dbReference type="PROSITE" id="PS51935">
    <property type="entry name" value="NLPC_P60"/>
    <property type="match status" value="1"/>
</dbReference>
<dbReference type="PROSITE" id="PS51257">
    <property type="entry name" value="PROKAR_LIPOPROTEIN"/>
    <property type="match status" value="1"/>
</dbReference>
<comment type="subcellular location">
    <subcellularLocation>
        <location evidence="3">Cell membrane</location>
        <topology evidence="3">Lipid-anchor</topology>
    </subcellularLocation>
</comment>
<comment type="similarity">
    <text evidence="2 3">Belongs to the peptidase C40 family.</text>
</comment>
<feature type="signal peptide" evidence="1">
    <location>
        <begin position="1"/>
        <end position="15"/>
    </location>
</feature>
<feature type="chain" id="PRO_0000019754" description="Probable endopeptidase NlpC">
    <location>
        <begin position="16"/>
        <end position="154"/>
    </location>
</feature>
<feature type="domain" description="NlpC/P60" evidence="2">
    <location>
        <begin position="32"/>
        <end position="154"/>
    </location>
</feature>
<feature type="active site" description="Nucleophile" evidence="2">
    <location>
        <position position="62"/>
    </location>
</feature>
<feature type="active site" description="Proton acceptor" evidence="2">
    <location>
        <position position="115"/>
    </location>
</feature>
<feature type="active site" evidence="2">
    <location>
        <position position="127"/>
    </location>
</feature>
<feature type="lipid moiety-binding region" description="N-palmitoyl cysteine" evidence="1">
    <location>
        <position position="16"/>
    </location>
</feature>
<feature type="lipid moiety-binding region" description="S-diacylglycerol cysteine" evidence="1">
    <location>
        <position position="16"/>
    </location>
</feature>
<keyword id="KW-1003">Cell membrane</keyword>
<keyword id="KW-0378">Hydrolase</keyword>
<keyword id="KW-0449">Lipoprotein</keyword>
<keyword id="KW-0472">Membrane</keyword>
<keyword id="KW-0564">Palmitate</keyword>
<keyword id="KW-0645">Protease</keyword>
<keyword id="KW-1185">Reference proteome</keyword>
<keyword id="KW-0732">Signal</keyword>
<keyword id="KW-0788">Thiol protease</keyword>
<accession>P23898</accession>
<protein>
    <recommendedName>
        <fullName>Probable endopeptidase NlpC</fullName>
        <ecNumber>3.4.-.-</ecNumber>
    </recommendedName>
    <alternativeName>
        <fullName>ORF-17</fullName>
    </alternativeName>
    <alternativeName>
        <fullName>Probable lipoprotein NlpC</fullName>
    </alternativeName>
</protein>
<organism>
    <name type="scientific">Escherichia coli (strain K12)</name>
    <dbReference type="NCBI Taxonomy" id="83333"/>
    <lineage>
        <taxon>Bacteria</taxon>
        <taxon>Pseudomonadati</taxon>
        <taxon>Pseudomonadota</taxon>
        <taxon>Gammaproteobacteria</taxon>
        <taxon>Enterobacterales</taxon>
        <taxon>Enterobacteriaceae</taxon>
        <taxon>Escherichia</taxon>
    </lineage>
</organism>
<sequence>MRFCLILITALLLAGCSHHKAPPPNARLSDSITVIAGLNDQLQSWHGTPYRYGGMTRRGVDCSGFVVVTMRDRFDLQLPRETKQQASIGTQIDKDELLPGDLVFFKTGSGQNGLHVGIYDTNNQFIHASTSKGVMRSSLDNVYWQKNFWQARRI</sequence>
<reference key="1">
    <citation type="submission" date="1989-02" db="EMBL/GenBank/DDBJ databases">
        <authorList>
            <person name="Kadner R.J."/>
        </authorList>
    </citation>
    <scope>NUCLEOTIDE SEQUENCE [GENOMIC DNA]</scope>
</reference>
<reference key="2">
    <citation type="journal article" date="1996" name="DNA Res.">
        <title>A 570-kb DNA sequence of the Escherichia coli K-12 genome corresponding to the 28.0-40.1 min region on the linkage map.</title>
        <authorList>
            <person name="Aiba H."/>
            <person name="Baba T."/>
            <person name="Fujita K."/>
            <person name="Hayashi K."/>
            <person name="Inada T."/>
            <person name="Isono K."/>
            <person name="Itoh T."/>
            <person name="Kasai H."/>
            <person name="Kashimoto K."/>
            <person name="Kimura S."/>
            <person name="Kitakawa M."/>
            <person name="Kitagawa M."/>
            <person name="Makino K."/>
            <person name="Miki T."/>
            <person name="Mizobuchi K."/>
            <person name="Mori H."/>
            <person name="Mori T."/>
            <person name="Motomura K."/>
            <person name="Nakade S."/>
            <person name="Nakamura Y."/>
            <person name="Nashimoto H."/>
            <person name="Nishio Y."/>
            <person name="Oshima T."/>
            <person name="Saito N."/>
            <person name="Sampei G."/>
            <person name="Seki Y."/>
            <person name="Sivasundaram S."/>
            <person name="Tagami H."/>
            <person name="Takeda J."/>
            <person name="Takemoto K."/>
            <person name="Takeuchi Y."/>
            <person name="Wada C."/>
            <person name="Yamamoto Y."/>
            <person name="Horiuchi T."/>
        </authorList>
    </citation>
    <scope>NUCLEOTIDE SEQUENCE [LARGE SCALE GENOMIC DNA]</scope>
    <source>
        <strain>K12 / W3110 / ATCC 27325 / DSM 5911</strain>
    </source>
</reference>
<reference key="3">
    <citation type="journal article" date="1997" name="Science">
        <title>The complete genome sequence of Escherichia coli K-12.</title>
        <authorList>
            <person name="Blattner F.R."/>
            <person name="Plunkett G. III"/>
            <person name="Bloch C.A."/>
            <person name="Perna N.T."/>
            <person name="Burland V."/>
            <person name="Riley M."/>
            <person name="Collado-Vides J."/>
            <person name="Glasner J.D."/>
            <person name="Rode C.K."/>
            <person name="Mayhew G.F."/>
            <person name="Gregor J."/>
            <person name="Davis N.W."/>
            <person name="Kirkpatrick H.A."/>
            <person name="Goeden M.A."/>
            <person name="Rose D.J."/>
            <person name="Mau B."/>
            <person name="Shao Y."/>
        </authorList>
    </citation>
    <scope>NUCLEOTIDE SEQUENCE [LARGE SCALE GENOMIC DNA]</scope>
    <source>
        <strain>K12 / MG1655 / ATCC 47076</strain>
    </source>
</reference>
<reference key="4">
    <citation type="journal article" date="2006" name="Mol. Syst. Biol.">
        <title>Highly accurate genome sequences of Escherichia coli K-12 strains MG1655 and W3110.</title>
        <authorList>
            <person name="Hayashi K."/>
            <person name="Morooka N."/>
            <person name="Yamamoto Y."/>
            <person name="Fujita K."/>
            <person name="Isono K."/>
            <person name="Choi S."/>
            <person name="Ohtsubo E."/>
            <person name="Baba T."/>
            <person name="Wanner B.L."/>
            <person name="Mori H."/>
            <person name="Horiuchi T."/>
        </authorList>
    </citation>
    <scope>NUCLEOTIDE SEQUENCE [LARGE SCALE GENOMIC DNA]</scope>
    <source>
        <strain>K12 / W3110 / ATCC 27325 / DSM 5911</strain>
    </source>
</reference>
<name>NLPC_ECOLI</name>
<evidence type="ECO:0000255" key="1">
    <source>
        <dbReference type="PROSITE-ProRule" id="PRU00303"/>
    </source>
</evidence>
<evidence type="ECO:0000255" key="2">
    <source>
        <dbReference type="PROSITE-ProRule" id="PRU01284"/>
    </source>
</evidence>
<evidence type="ECO:0000305" key="3"/>
<proteinExistence type="inferred from homology"/>
<gene>
    <name type="primary">nlpC</name>
    <name type="ordered locus">b1708</name>
    <name type="ordered locus">JW1698</name>
</gene>